<accession>Q3JF20</accession>
<feature type="chain" id="PRO_0000318250" description="Protein-export protein SecB">
    <location>
        <begin position="1"/>
        <end position="164"/>
    </location>
</feature>
<keyword id="KW-0143">Chaperone</keyword>
<keyword id="KW-0963">Cytoplasm</keyword>
<keyword id="KW-0653">Protein transport</keyword>
<keyword id="KW-1185">Reference proteome</keyword>
<keyword id="KW-0811">Translocation</keyword>
<keyword id="KW-0813">Transport</keyword>
<protein>
    <recommendedName>
        <fullName evidence="1">Protein-export protein SecB</fullName>
    </recommendedName>
</protein>
<comment type="function">
    <text evidence="1">One of the proteins required for the normal export of preproteins out of the cell cytoplasm. It is a molecular chaperone that binds to a subset of precursor proteins, maintaining them in a translocation-competent state. It also specifically binds to its receptor SecA.</text>
</comment>
<comment type="subunit">
    <text evidence="1">Homotetramer, a dimer of dimers. One homotetramer interacts with 1 SecA dimer.</text>
</comment>
<comment type="subcellular location">
    <subcellularLocation>
        <location evidence="1">Cytoplasm</location>
    </subcellularLocation>
</comment>
<comment type="similarity">
    <text evidence="1">Belongs to the SecB family.</text>
</comment>
<evidence type="ECO:0000255" key="1">
    <source>
        <dbReference type="HAMAP-Rule" id="MF_00821"/>
    </source>
</evidence>
<name>SECB_NITOC</name>
<dbReference type="EMBL" id="CP000127">
    <property type="protein sequence ID" value="ABA56576.1"/>
    <property type="molecule type" value="Genomic_DNA"/>
</dbReference>
<dbReference type="RefSeq" id="WP_002813889.1">
    <property type="nucleotide sequence ID" value="NC_007484.1"/>
</dbReference>
<dbReference type="SMR" id="Q3JF20"/>
<dbReference type="FunCoup" id="Q3JF20">
    <property type="interactions" value="232"/>
</dbReference>
<dbReference type="STRING" id="323261.Noc_0034"/>
<dbReference type="KEGG" id="noc:Noc_0034"/>
<dbReference type="eggNOG" id="COG1952">
    <property type="taxonomic scope" value="Bacteria"/>
</dbReference>
<dbReference type="HOGENOM" id="CLU_111574_1_0_6"/>
<dbReference type="InParanoid" id="Q3JF20"/>
<dbReference type="Proteomes" id="UP000006838">
    <property type="component" value="Chromosome"/>
</dbReference>
<dbReference type="GO" id="GO:0005737">
    <property type="term" value="C:cytoplasm"/>
    <property type="evidence" value="ECO:0007669"/>
    <property type="project" value="UniProtKB-SubCell"/>
</dbReference>
<dbReference type="GO" id="GO:0051082">
    <property type="term" value="F:unfolded protein binding"/>
    <property type="evidence" value="ECO:0007669"/>
    <property type="project" value="InterPro"/>
</dbReference>
<dbReference type="GO" id="GO:0006457">
    <property type="term" value="P:protein folding"/>
    <property type="evidence" value="ECO:0007669"/>
    <property type="project" value="UniProtKB-UniRule"/>
</dbReference>
<dbReference type="GO" id="GO:0051262">
    <property type="term" value="P:protein tetramerization"/>
    <property type="evidence" value="ECO:0007669"/>
    <property type="project" value="InterPro"/>
</dbReference>
<dbReference type="GO" id="GO:0015031">
    <property type="term" value="P:protein transport"/>
    <property type="evidence" value="ECO:0007669"/>
    <property type="project" value="UniProtKB-UniRule"/>
</dbReference>
<dbReference type="Gene3D" id="3.10.420.10">
    <property type="entry name" value="SecB-like"/>
    <property type="match status" value="1"/>
</dbReference>
<dbReference type="HAMAP" id="MF_00821">
    <property type="entry name" value="SecB"/>
    <property type="match status" value="1"/>
</dbReference>
<dbReference type="InterPro" id="IPR003708">
    <property type="entry name" value="SecB"/>
</dbReference>
<dbReference type="InterPro" id="IPR035958">
    <property type="entry name" value="SecB-like_sf"/>
</dbReference>
<dbReference type="NCBIfam" id="NF004392">
    <property type="entry name" value="PRK05751.1-3"/>
    <property type="match status" value="1"/>
</dbReference>
<dbReference type="NCBIfam" id="NF004393">
    <property type="entry name" value="PRK05751.1-4"/>
    <property type="match status" value="1"/>
</dbReference>
<dbReference type="NCBIfam" id="NF004394">
    <property type="entry name" value="PRK05751.1-5"/>
    <property type="match status" value="1"/>
</dbReference>
<dbReference type="NCBIfam" id="TIGR00809">
    <property type="entry name" value="secB"/>
    <property type="match status" value="1"/>
</dbReference>
<dbReference type="PANTHER" id="PTHR36918">
    <property type="match status" value="1"/>
</dbReference>
<dbReference type="PANTHER" id="PTHR36918:SF1">
    <property type="entry name" value="PROTEIN-EXPORT PROTEIN SECB"/>
    <property type="match status" value="1"/>
</dbReference>
<dbReference type="Pfam" id="PF02556">
    <property type="entry name" value="SecB"/>
    <property type="match status" value="1"/>
</dbReference>
<dbReference type="PRINTS" id="PR01594">
    <property type="entry name" value="SECBCHAPRONE"/>
</dbReference>
<dbReference type="SUPFAM" id="SSF54611">
    <property type="entry name" value="SecB-like"/>
    <property type="match status" value="1"/>
</dbReference>
<proteinExistence type="inferred from homology"/>
<reference key="1">
    <citation type="journal article" date="2006" name="Appl. Environ. Microbiol.">
        <title>Complete genome sequence of the marine, chemolithoautotrophic, ammonia-oxidizing bacterium Nitrosococcus oceani ATCC 19707.</title>
        <authorList>
            <person name="Klotz M.G."/>
            <person name="Arp D.J."/>
            <person name="Chain P.S.G."/>
            <person name="El-Sheikh A.F."/>
            <person name="Hauser L.J."/>
            <person name="Hommes N.G."/>
            <person name="Larimer F.W."/>
            <person name="Malfatti S.A."/>
            <person name="Norton J.M."/>
            <person name="Poret-Peterson A.T."/>
            <person name="Vergez L.M."/>
            <person name="Ward B.B."/>
        </authorList>
    </citation>
    <scope>NUCLEOTIDE SEQUENCE [LARGE SCALE GENOMIC DNA]</scope>
    <source>
        <strain>ATCC 19707 / BCRC 17464 / JCM 30415 / NCIMB 11848 / C-107</strain>
    </source>
</reference>
<sequence length="164" mass="18250">MAEDSTNQQTSEQGQQAQFAIQKIYVKDLSFETPNSPHIFNQEQEWKPEFNLQLSNKNQRIAENVHEVVLSLTVTAKLGDQTAFLVEVHQAGIFMLNGYGEESLGSLLGSYCPNILFPFAREVVADLVTKGGFPPLLLAPVNFDALYAQQQQQRQSAGAAEVRH</sequence>
<organism>
    <name type="scientific">Nitrosococcus oceani (strain ATCC 19707 / BCRC 17464 / JCM 30415 / NCIMB 11848 / C-107)</name>
    <dbReference type="NCBI Taxonomy" id="323261"/>
    <lineage>
        <taxon>Bacteria</taxon>
        <taxon>Pseudomonadati</taxon>
        <taxon>Pseudomonadota</taxon>
        <taxon>Gammaproteobacteria</taxon>
        <taxon>Chromatiales</taxon>
        <taxon>Chromatiaceae</taxon>
        <taxon>Nitrosococcus</taxon>
    </lineage>
</organism>
<gene>
    <name evidence="1" type="primary">secB</name>
    <name type="ordered locus">Noc_0034</name>
</gene>